<organism>
    <name type="scientific">Nicotiana tabacum</name>
    <name type="common">Common tobacco</name>
    <dbReference type="NCBI Taxonomy" id="4097"/>
    <lineage>
        <taxon>Eukaryota</taxon>
        <taxon>Viridiplantae</taxon>
        <taxon>Streptophyta</taxon>
        <taxon>Embryophyta</taxon>
        <taxon>Tracheophyta</taxon>
        <taxon>Spermatophyta</taxon>
        <taxon>Magnoliopsida</taxon>
        <taxon>eudicotyledons</taxon>
        <taxon>Gunneridae</taxon>
        <taxon>Pentapetalae</taxon>
        <taxon>asterids</taxon>
        <taxon>lamiids</taxon>
        <taxon>Solanales</taxon>
        <taxon>Solanaceae</taxon>
        <taxon>Nicotianoideae</taxon>
        <taxon>Nicotianeae</taxon>
        <taxon>Nicotiana</taxon>
    </lineage>
</organism>
<reference key="1">
    <citation type="journal article" date="1998" name="FEBS Lett.">
        <title>Cloning of the V-ATPase subunit G in plant: functional expression and sub-cellular localization.</title>
        <authorList>
            <person name="Rouquie D."/>
            <person name="Tournaire-Roux C."/>
            <person name="Szponarski W."/>
            <person name="Rossignol M."/>
            <person name="Doumas P."/>
        </authorList>
    </citation>
    <scope>NUCLEOTIDE SEQUENCE [MRNA]</scope>
    <source>
        <strain>cv. Xanthi</strain>
        <tissue>Leaf</tissue>
    </source>
</reference>
<gene>
    <name type="primary">VATG2</name>
    <name type="synonym">VAG2</name>
</gene>
<name>VATG2_TOBAC</name>
<comment type="function">
    <text>Catalytic subunit of the peripheral V1 complex of vacuolar ATPase (V-ATPase). V-ATPase is responsible for acidifying a variety of intracellular compartments in eukaryotic cells.</text>
</comment>
<comment type="subunit">
    <text>V-ATPase is a heteromultimeric enzyme composed of a peripheral catalytic V1 complex (components A to H) attached to an integral membrane V0 proton pore complex (components: a, c, c', c'' and d).</text>
</comment>
<comment type="similarity">
    <text evidence="1">Belongs to the V-ATPase G subunit family.</text>
</comment>
<dbReference type="EMBL" id="AJ005900">
    <property type="protein sequence ID" value="CAA06757.1"/>
    <property type="molecule type" value="mRNA"/>
</dbReference>
<dbReference type="RefSeq" id="XP_016478424.1">
    <property type="nucleotide sequence ID" value="XM_016622938.1"/>
</dbReference>
<dbReference type="SMR" id="O82703"/>
<dbReference type="STRING" id="4097.O82703"/>
<dbReference type="PaxDb" id="4097-O82703"/>
<dbReference type="KEGG" id="nta:107799789"/>
<dbReference type="OMA" id="RHSKHNI"/>
<dbReference type="OrthoDB" id="250802at2759"/>
<dbReference type="PhylomeDB" id="O82703"/>
<dbReference type="Proteomes" id="UP000084051">
    <property type="component" value="Unplaced"/>
</dbReference>
<dbReference type="GO" id="GO:0000221">
    <property type="term" value="C:vacuolar proton-transporting V-type ATPase, V1 domain"/>
    <property type="evidence" value="ECO:0000318"/>
    <property type="project" value="GO_Central"/>
</dbReference>
<dbReference type="GO" id="GO:0016887">
    <property type="term" value="F:ATP hydrolysis activity"/>
    <property type="evidence" value="ECO:0000318"/>
    <property type="project" value="GO_Central"/>
</dbReference>
<dbReference type="GO" id="GO:0046961">
    <property type="term" value="F:proton-transporting ATPase activity, rotational mechanism"/>
    <property type="evidence" value="ECO:0000318"/>
    <property type="project" value="GO_Central"/>
</dbReference>
<dbReference type="FunFam" id="1.20.5.2950:FF:000001">
    <property type="entry name" value="V-type proton ATPase subunit G"/>
    <property type="match status" value="1"/>
</dbReference>
<dbReference type="Gene3D" id="1.20.5.2950">
    <property type="match status" value="1"/>
</dbReference>
<dbReference type="InterPro" id="IPR005124">
    <property type="entry name" value="V-ATPase_G"/>
</dbReference>
<dbReference type="NCBIfam" id="TIGR01147">
    <property type="entry name" value="V_ATP_synt_G"/>
    <property type="match status" value="1"/>
</dbReference>
<dbReference type="PANTHER" id="PTHR12713:SF22">
    <property type="entry name" value="V-TYPE PROTON ATPASE SUBUNIT G 2"/>
    <property type="match status" value="1"/>
</dbReference>
<dbReference type="PANTHER" id="PTHR12713">
    <property type="entry name" value="VACUOLAR ATP SYNTHASE SUBUNIT G"/>
    <property type="match status" value="1"/>
</dbReference>
<dbReference type="Pfam" id="PF03179">
    <property type="entry name" value="V-ATPase_G"/>
    <property type="match status" value="1"/>
</dbReference>
<accession>O82703</accession>
<evidence type="ECO:0000305" key="1"/>
<sequence length="111" mass="12514">MESNRGSQNGIQLLLGAEQEAQHIVNAARTGKQARMKQAKEEAEKEIAEFRAYMEAEFQRNVEQTSGDSGANVKRLEQETFAKIQHLKTEAESISHDVVQMLLRQVTTVKN</sequence>
<proteinExistence type="inferred from homology"/>
<feature type="chain" id="PRO_0000192913" description="V-type proton ATPase subunit G 2">
    <location>
        <begin position="1"/>
        <end position="111"/>
    </location>
</feature>
<protein>
    <recommendedName>
        <fullName>V-type proton ATPase subunit G 2</fullName>
        <shortName>V-ATPase subunit G 2</shortName>
    </recommendedName>
    <alternativeName>
        <fullName>Vacuolar proton pump subunit G 2</fullName>
    </alternativeName>
</protein>
<keyword id="KW-0375">Hydrogen ion transport</keyword>
<keyword id="KW-0406">Ion transport</keyword>
<keyword id="KW-1185">Reference proteome</keyword>
<keyword id="KW-0813">Transport</keyword>